<gene>
    <name evidence="1" type="primary">trpD</name>
    <name type="ordered locus">PF1710</name>
</gene>
<accession>Q8U089</accession>
<organism>
    <name type="scientific">Pyrococcus furiosus (strain ATCC 43587 / DSM 3638 / JCM 8422 / Vc1)</name>
    <dbReference type="NCBI Taxonomy" id="186497"/>
    <lineage>
        <taxon>Archaea</taxon>
        <taxon>Methanobacteriati</taxon>
        <taxon>Methanobacteriota</taxon>
        <taxon>Thermococci</taxon>
        <taxon>Thermococcales</taxon>
        <taxon>Thermococcaceae</taxon>
        <taxon>Pyrococcus</taxon>
    </lineage>
</organism>
<feature type="chain" id="PRO_0000154520" description="Anthranilate phosphoribosyltransferase">
    <location>
        <begin position="1"/>
        <end position="324"/>
    </location>
</feature>
<feature type="binding site" evidence="1">
    <location>
        <position position="72"/>
    </location>
    <ligand>
        <name>5-phospho-alpha-D-ribose 1-diphosphate</name>
        <dbReference type="ChEBI" id="CHEBI:58017"/>
    </ligand>
</feature>
<feature type="binding site" evidence="1">
    <location>
        <position position="72"/>
    </location>
    <ligand>
        <name>anthranilate</name>
        <dbReference type="ChEBI" id="CHEBI:16567"/>
        <label>1</label>
    </ligand>
</feature>
<feature type="binding site" evidence="1">
    <location>
        <begin position="75"/>
        <end position="76"/>
    </location>
    <ligand>
        <name>5-phospho-alpha-D-ribose 1-diphosphate</name>
        <dbReference type="ChEBI" id="CHEBI:58017"/>
    </ligand>
</feature>
<feature type="binding site" evidence="1">
    <location>
        <position position="80"/>
    </location>
    <ligand>
        <name>5-phospho-alpha-D-ribose 1-diphosphate</name>
        <dbReference type="ChEBI" id="CHEBI:58017"/>
    </ligand>
</feature>
<feature type="binding site" evidence="1">
    <location>
        <begin position="82"/>
        <end position="85"/>
    </location>
    <ligand>
        <name>5-phospho-alpha-D-ribose 1-diphosphate</name>
        <dbReference type="ChEBI" id="CHEBI:58017"/>
    </ligand>
</feature>
<feature type="binding site" evidence="1">
    <location>
        <position position="84"/>
    </location>
    <ligand>
        <name>Mg(2+)</name>
        <dbReference type="ChEBI" id="CHEBI:18420"/>
        <label>1</label>
    </ligand>
</feature>
<feature type="binding site" evidence="1">
    <location>
        <begin position="99"/>
        <end position="107"/>
    </location>
    <ligand>
        <name>5-phospho-alpha-D-ribose 1-diphosphate</name>
        <dbReference type="ChEBI" id="CHEBI:58017"/>
    </ligand>
</feature>
<feature type="binding site" evidence="1">
    <location>
        <position position="102"/>
    </location>
    <ligand>
        <name>anthranilate</name>
        <dbReference type="ChEBI" id="CHEBI:16567"/>
        <label>1</label>
    </ligand>
</feature>
<feature type="binding site" evidence="1">
    <location>
        <position position="111"/>
    </location>
    <ligand>
        <name>5-phospho-alpha-D-ribose 1-diphosphate</name>
        <dbReference type="ChEBI" id="CHEBI:58017"/>
    </ligand>
</feature>
<feature type="binding site" evidence="1">
    <location>
        <position position="157"/>
    </location>
    <ligand>
        <name>anthranilate</name>
        <dbReference type="ChEBI" id="CHEBI:16567"/>
        <label>2</label>
    </ligand>
</feature>
<feature type="binding site" evidence="1">
    <location>
        <position position="215"/>
    </location>
    <ligand>
        <name>Mg(2+)</name>
        <dbReference type="ChEBI" id="CHEBI:18420"/>
        <label>2</label>
    </ligand>
</feature>
<feature type="binding site" evidence="1">
    <location>
        <position position="216"/>
    </location>
    <ligand>
        <name>Mg(2+)</name>
        <dbReference type="ChEBI" id="CHEBI:18420"/>
        <label>1</label>
    </ligand>
</feature>
<feature type="binding site" evidence="1">
    <location>
        <position position="216"/>
    </location>
    <ligand>
        <name>Mg(2+)</name>
        <dbReference type="ChEBI" id="CHEBI:18420"/>
        <label>2</label>
    </ligand>
</feature>
<reference key="1">
    <citation type="journal article" date="1999" name="Genetics">
        <title>Divergence of the hyperthermophilic archaea Pyrococcus furiosus and P. horikoshii inferred from complete genomic sequences.</title>
        <authorList>
            <person name="Maeder D.L."/>
            <person name="Weiss R.B."/>
            <person name="Dunn D.M."/>
            <person name="Cherry J.L."/>
            <person name="Gonzalez J.M."/>
            <person name="DiRuggiero J."/>
            <person name="Robb F.T."/>
        </authorList>
    </citation>
    <scope>NUCLEOTIDE SEQUENCE [LARGE SCALE GENOMIC DNA]</scope>
    <source>
        <strain>ATCC 43587 / DSM 3638 / JCM 8422 / Vc1</strain>
    </source>
</reference>
<name>TRPD_PYRFU</name>
<dbReference type="EC" id="2.4.2.18" evidence="1"/>
<dbReference type="EMBL" id="AE009950">
    <property type="protein sequence ID" value="AAL81834.1"/>
    <property type="molecule type" value="Genomic_DNA"/>
</dbReference>
<dbReference type="RefSeq" id="WP_011012856.1">
    <property type="nucleotide sequence ID" value="NZ_CP023154.1"/>
</dbReference>
<dbReference type="SMR" id="Q8U089"/>
<dbReference type="STRING" id="186497.PF1710"/>
<dbReference type="PaxDb" id="186497-PF1710"/>
<dbReference type="GeneID" id="41713541"/>
<dbReference type="KEGG" id="pfu:PF1710"/>
<dbReference type="PATRIC" id="fig|186497.12.peg.1778"/>
<dbReference type="eggNOG" id="arCOG02012">
    <property type="taxonomic scope" value="Archaea"/>
</dbReference>
<dbReference type="HOGENOM" id="CLU_034315_2_1_2"/>
<dbReference type="OrthoDB" id="8214at2157"/>
<dbReference type="PhylomeDB" id="Q8U089"/>
<dbReference type="UniPathway" id="UPA00035">
    <property type="reaction ID" value="UER00041"/>
</dbReference>
<dbReference type="Proteomes" id="UP000001013">
    <property type="component" value="Chromosome"/>
</dbReference>
<dbReference type="GO" id="GO:0005829">
    <property type="term" value="C:cytosol"/>
    <property type="evidence" value="ECO:0007669"/>
    <property type="project" value="TreeGrafter"/>
</dbReference>
<dbReference type="GO" id="GO:0004048">
    <property type="term" value="F:anthranilate phosphoribosyltransferase activity"/>
    <property type="evidence" value="ECO:0007669"/>
    <property type="project" value="UniProtKB-UniRule"/>
</dbReference>
<dbReference type="GO" id="GO:0000287">
    <property type="term" value="F:magnesium ion binding"/>
    <property type="evidence" value="ECO:0007669"/>
    <property type="project" value="UniProtKB-UniRule"/>
</dbReference>
<dbReference type="GO" id="GO:0000162">
    <property type="term" value="P:L-tryptophan biosynthetic process"/>
    <property type="evidence" value="ECO:0007669"/>
    <property type="project" value="UniProtKB-UniRule"/>
</dbReference>
<dbReference type="FunFam" id="3.40.1030.10:FF:000002">
    <property type="entry name" value="Anthranilate phosphoribosyltransferase"/>
    <property type="match status" value="1"/>
</dbReference>
<dbReference type="Gene3D" id="3.40.1030.10">
    <property type="entry name" value="Nucleoside phosphorylase/phosphoribosyltransferase catalytic domain"/>
    <property type="match status" value="1"/>
</dbReference>
<dbReference type="Gene3D" id="1.20.970.10">
    <property type="entry name" value="Transferase, Pyrimidine Nucleoside Phosphorylase, Chain C"/>
    <property type="match status" value="1"/>
</dbReference>
<dbReference type="HAMAP" id="MF_00211">
    <property type="entry name" value="TrpD"/>
    <property type="match status" value="1"/>
</dbReference>
<dbReference type="InterPro" id="IPR005940">
    <property type="entry name" value="Anthranilate_Pribosyl_Tfrase"/>
</dbReference>
<dbReference type="InterPro" id="IPR000312">
    <property type="entry name" value="Glycosyl_Trfase_fam3"/>
</dbReference>
<dbReference type="InterPro" id="IPR017459">
    <property type="entry name" value="Glycosyl_Trfase_fam3_N_dom"/>
</dbReference>
<dbReference type="InterPro" id="IPR036320">
    <property type="entry name" value="Glycosyl_Trfase_fam3_N_dom_sf"/>
</dbReference>
<dbReference type="InterPro" id="IPR035902">
    <property type="entry name" value="Nuc_phospho_transferase"/>
</dbReference>
<dbReference type="NCBIfam" id="TIGR01245">
    <property type="entry name" value="trpD"/>
    <property type="match status" value="1"/>
</dbReference>
<dbReference type="PANTHER" id="PTHR43285">
    <property type="entry name" value="ANTHRANILATE PHOSPHORIBOSYLTRANSFERASE"/>
    <property type="match status" value="1"/>
</dbReference>
<dbReference type="PANTHER" id="PTHR43285:SF2">
    <property type="entry name" value="ANTHRANILATE PHOSPHORIBOSYLTRANSFERASE"/>
    <property type="match status" value="1"/>
</dbReference>
<dbReference type="Pfam" id="PF02885">
    <property type="entry name" value="Glycos_trans_3N"/>
    <property type="match status" value="1"/>
</dbReference>
<dbReference type="Pfam" id="PF00591">
    <property type="entry name" value="Glycos_transf_3"/>
    <property type="match status" value="1"/>
</dbReference>
<dbReference type="SUPFAM" id="SSF52418">
    <property type="entry name" value="Nucleoside phosphorylase/phosphoribosyltransferase catalytic domain"/>
    <property type="match status" value="1"/>
</dbReference>
<dbReference type="SUPFAM" id="SSF47648">
    <property type="entry name" value="Nucleoside phosphorylase/phosphoribosyltransferase N-terminal domain"/>
    <property type="match status" value="1"/>
</dbReference>
<keyword id="KW-0028">Amino-acid biosynthesis</keyword>
<keyword id="KW-0057">Aromatic amino acid biosynthesis</keyword>
<keyword id="KW-0328">Glycosyltransferase</keyword>
<keyword id="KW-0460">Magnesium</keyword>
<keyword id="KW-0479">Metal-binding</keyword>
<keyword id="KW-1185">Reference proteome</keyword>
<keyword id="KW-0808">Transferase</keyword>
<keyword id="KW-0822">Tryptophan biosynthesis</keyword>
<comment type="function">
    <text evidence="1">Catalyzes the transfer of the phosphoribosyl group of 5-phosphorylribose-1-pyrophosphate (PRPP) to anthranilate to yield N-(5'-phosphoribosyl)-anthranilate (PRA).</text>
</comment>
<comment type="catalytic activity">
    <reaction evidence="1">
        <text>N-(5-phospho-beta-D-ribosyl)anthranilate + diphosphate = 5-phospho-alpha-D-ribose 1-diphosphate + anthranilate</text>
        <dbReference type="Rhea" id="RHEA:11768"/>
        <dbReference type="ChEBI" id="CHEBI:16567"/>
        <dbReference type="ChEBI" id="CHEBI:18277"/>
        <dbReference type="ChEBI" id="CHEBI:33019"/>
        <dbReference type="ChEBI" id="CHEBI:58017"/>
        <dbReference type="EC" id="2.4.2.18"/>
    </reaction>
</comment>
<comment type="cofactor">
    <cofactor evidence="1">
        <name>Mg(2+)</name>
        <dbReference type="ChEBI" id="CHEBI:18420"/>
    </cofactor>
    <text evidence="1">Binds 2 magnesium ions per monomer.</text>
</comment>
<comment type="pathway">
    <text evidence="1">Amino-acid biosynthesis; L-tryptophan biosynthesis; L-tryptophan from chorismate: step 2/5.</text>
</comment>
<comment type="subunit">
    <text evidence="1">Homodimer.</text>
</comment>
<comment type="similarity">
    <text evidence="1">Belongs to the anthranilate phosphoribosyltransferase family.</text>
</comment>
<proteinExistence type="inferred from homology"/>
<evidence type="ECO:0000255" key="1">
    <source>
        <dbReference type="HAMAP-Rule" id="MF_00211"/>
    </source>
</evidence>
<sequence length="324" mass="35484">MLEKIVENRHLSFEEAYDLFNILKEESEVRIAAYLAALQTKGYTSEEIAGFAKAMRDNAIKLDLGEVLDTAGTGGDKSFTINVSTASALILSEYTKVAKHGNVSVTSRSGSANLLEALGINIKISPEKAKEMIEKVNFTFIFAPMYHPALKRIMPVRKELGIKTIFNILGPLANPANPAYQVVGVNSRDLVEKMARALNYLGVKRATVVHGSGLDEISPEKETIVAEVNRGDIDFYTVTPEDFGLARTKVIPCYSPEESAERIRAVLRGNGKNEDRNFVLINSAMALYTIGIASDLKEGVELAENVLGEKIIKKLEEIACLSKS</sequence>
<protein>
    <recommendedName>
        <fullName evidence="1">Anthranilate phosphoribosyltransferase</fullName>
        <ecNumber evidence="1">2.4.2.18</ecNumber>
    </recommendedName>
</protein>